<accession>Q6FWM8</accession>
<evidence type="ECO:0000250" key="1"/>
<evidence type="ECO:0000256" key="2">
    <source>
        <dbReference type="SAM" id="MobiDB-lite"/>
    </source>
</evidence>
<evidence type="ECO:0000305" key="3"/>
<feature type="initiator methionine" description="Removed" evidence="1">
    <location>
        <position position="1"/>
    </location>
</feature>
<feature type="chain" id="PRO_0000071931" description="Histone H2B.1">
    <location>
        <begin position="2"/>
        <end position="129"/>
    </location>
</feature>
<feature type="region of interest" description="Disordered" evidence="2">
    <location>
        <begin position="1"/>
        <end position="35"/>
    </location>
</feature>
<feature type="compositionally biased region" description="Basic and acidic residues" evidence="2">
    <location>
        <begin position="1"/>
        <end position="17"/>
    </location>
</feature>
<feature type="modified residue" description="N6-acetyllysine; alternate" evidence="1">
    <location>
        <position position="5"/>
    </location>
</feature>
<feature type="modified residue" description="N6-acetyllysine; alternate" evidence="1">
    <location>
        <position position="6"/>
    </location>
</feature>
<feature type="modified residue" description="Phosphoserine" evidence="1">
    <location>
        <position position="9"/>
    </location>
</feature>
<feature type="modified residue" description="N6-acetyllysine" evidence="1">
    <location>
        <position position="10"/>
    </location>
</feature>
<feature type="modified residue" description="N6-acetyllysine; alternate" evidence="1">
    <location>
        <position position="15"/>
    </location>
</feature>
<feature type="cross-link" description="Glycyl lysine isopeptide (Lys-Gly) (interchain with G-Cter in SUMO); alternate" evidence="1">
    <location>
        <position position="5"/>
    </location>
</feature>
<feature type="cross-link" description="Glycyl lysine isopeptide (Lys-Gly) (interchain with G-Cter in SUMO); alternate" evidence="1">
    <location>
        <position position="6"/>
    </location>
</feature>
<feature type="cross-link" description="Glycyl lysine isopeptide (Lys-Gly) (interchain with G-Cter in SUMO); alternate" evidence="1">
    <location>
        <position position="15"/>
    </location>
</feature>
<feature type="cross-link" description="Glycyl lysine isopeptide (Lys-Gly) (interchain with G-Cter in SUMO)" evidence="1">
    <location>
        <position position="16"/>
    </location>
</feature>
<feature type="cross-link" description="Glycyl lysine isopeptide (Lys-Gly) (interchain with G-Cter in ubiquitin)" evidence="1">
    <location>
        <position position="122"/>
    </location>
</feature>
<organism>
    <name type="scientific">Candida glabrata (strain ATCC 2001 / BCRC 20586 / JCM 3761 / NBRC 0622 / NRRL Y-65 / CBS 138)</name>
    <name type="common">Yeast</name>
    <name type="synonym">Nakaseomyces glabratus</name>
    <dbReference type="NCBI Taxonomy" id="284593"/>
    <lineage>
        <taxon>Eukaryota</taxon>
        <taxon>Fungi</taxon>
        <taxon>Dikarya</taxon>
        <taxon>Ascomycota</taxon>
        <taxon>Saccharomycotina</taxon>
        <taxon>Saccharomycetes</taxon>
        <taxon>Saccharomycetales</taxon>
        <taxon>Saccharomycetaceae</taxon>
        <taxon>Nakaseomyces</taxon>
    </lineage>
</organism>
<keyword id="KW-0007">Acetylation</keyword>
<keyword id="KW-0158">Chromosome</keyword>
<keyword id="KW-0238">DNA-binding</keyword>
<keyword id="KW-1017">Isopeptide bond</keyword>
<keyword id="KW-0544">Nucleosome core</keyword>
<keyword id="KW-0539">Nucleus</keyword>
<keyword id="KW-0597">Phosphoprotein</keyword>
<keyword id="KW-1185">Reference proteome</keyword>
<keyword id="KW-0832">Ubl conjugation</keyword>
<gene>
    <name type="primary">HTB1</name>
    <name type="ordered locus">CAGL0C04389g</name>
</gene>
<reference key="1">
    <citation type="journal article" date="2004" name="Nature">
        <title>Genome evolution in yeasts.</title>
        <authorList>
            <person name="Dujon B."/>
            <person name="Sherman D."/>
            <person name="Fischer G."/>
            <person name="Durrens P."/>
            <person name="Casaregola S."/>
            <person name="Lafontaine I."/>
            <person name="de Montigny J."/>
            <person name="Marck C."/>
            <person name="Neuveglise C."/>
            <person name="Talla E."/>
            <person name="Goffard N."/>
            <person name="Frangeul L."/>
            <person name="Aigle M."/>
            <person name="Anthouard V."/>
            <person name="Babour A."/>
            <person name="Barbe V."/>
            <person name="Barnay S."/>
            <person name="Blanchin S."/>
            <person name="Beckerich J.-M."/>
            <person name="Beyne E."/>
            <person name="Bleykasten C."/>
            <person name="Boisrame A."/>
            <person name="Boyer J."/>
            <person name="Cattolico L."/>
            <person name="Confanioleri F."/>
            <person name="de Daruvar A."/>
            <person name="Despons L."/>
            <person name="Fabre E."/>
            <person name="Fairhead C."/>
            <person name="Ferry-Dumazet H."/>
            <person name="Groppi A."/>
            <person name="Hantraye F."/>
            <person name="Hennequin C."/>
            <person name="Jauniaux N."/>
            <person name="Joyet P."/>
            <person name="Kachouri R."/>
            <person name="Kerrest A."/>
            <person name="Koszul R."/>
            <person name="Lemaire M."/>
            <person name="Lesur I."/>
            <person name="Ma L."/>
            <person name="Muller H."/>
            <person name="Nicaud J.-M."/>
            <person name="Nikolski M."/>
            <person name="Oztas S."/>
            <person name="Ozier-Kalogeropoulos O."/>
            <person name="Pellenz S."/>
            <person name="Potier S."/>
            <person name="Richard G.-F."/>
            <person name="Straub M.-L."/>
            <person name="Suleau A."/>
            <person name="Swennen D."/>
            <person name="Tekaia F."/>
            <person name="Wesolowski-Louvel M."/>
            <person name="Westhof E."/>
            <person name="Wirth B."/>
            <person name="Zeniou-Meyer M."/>
            <person name="Zivanovic Y."/>
            <person name="Bolotin-Fukuhara M."/>
            <person name="Thierry A."/>
            <person name="Bouchier C."/>
            <person name="Caudron B."/>
            <person name="Scarpelli C."/>
            <person name="Gaillardin C."/>
            <person name="Weissenbach J."/>
            <person name="Wincker P."/>
            <person name="Souciet J.-L."/>
        </authorList>
    </citation>
    <scope>NUCLEOTIDE SEQUENCE [LARGE SCALE GENOMIC DNA]</scope>
    <source>
        <strain>ATCC 2001 / BCRC 20586 / JCM 3761 / NBRC 0622 / NRRL Y-65 / CBS 138</strain>
    </source>
</reference>
<dbReference type="EMBL" id="CR380949">
    <property type="protein sequence ID" value="CAG58272.1"/>
    <property type="molecule type" value="Genomic_DNA"/>
</dbReference>
<dbReference type="RefSeq" id="XP_445366.1">
    <property type="nucleotide sequence ID" value="XM_445366.1"/>
</dbReference>
<dbReference type="SMR" id="Q6FWM8"/>
<dbReference type="STRING" id="284593.Q6FWM8"/>
<dbReference type="EnsemblFungi" id="CAGL0C04389g-T">
    <property type="protein sequence ID" value="CAGL0C04389g-T-p1"/>
    <property type="gene ID" value="CAGL0C04389g"/>
</dbReference>
<dbReference type="KEGG" id="cgr:2886743"/>
<dbReference type="CGD" id="CAL0127264">
    <property type="gene designation" value="CAGL0C04389g"/>
</dbReference>
<dbReference type="VEuPathDB" id="FungiDB:B1J91_C04389g"/>
<dbReference type="VEuPathDB" id="FungiDB:CAGL0C04389g"/>
<dbReference type="eggNOG" id="KOG1744">
    <property type="taxonomic scope" value="Eukaryota"/>
</dbReference>
<dbReference type="HOGENOM" id="CLU_075666_1_3_1"/>
<dbReference type="InParanoid" id="Q6FWM8"/>
<dbReference type="OMA" id="AQLCQTT"/>
<dbReference type="Proteomes" id="UP000002428">
    <property type="component" value="Chromosome C"/>
</dbReference>
<dbReference type="GO" id="GO:0005576">
    <property type="term" value="C:extracellular region"/>
    <property type="evidence" value="ECO:0000314"/>
    <property type="project" value="CGD"/>
</dbReference>
<dbReference type="GO" id="GO:0062040">
    <property type="term" value="C:fungal biofilm matrix"/>
    <property type="evidence" value="ECO:0000314"/>
    <property type="project" value="CGD"/>
</dbReference>
<dbReference type="GO" id="GO:0000786">
    <property type="term" value="C:nucleosome"/>
    <property type="evidence" value="ECO:0007669"/>
    <property type="project" value="UniProtKB-KW"/>
</dbReference>
<dbReference type="GO" id="GO:0005634">
    <property type="term" value="C:nucleus"/>
    <property type="evidence" value="ECO:0007669"/>
    <property type="project" value="UniProtKB-SubCell"/>
</dbReference>
<dbReference type="GO" id="GO:0003677">
    <property type="term" value="F:DNA binding"/>
    <property type="evidence" value="ECO:0007669"/>
    <property type="project" value="UniProtKB-KW"/>
</dbReference>
<dbReference type="GO" id="GO:0046982">
    <property type="term" value="F:protein heterodimerization activity"/>
    <property type="evidence" value="ECO:0007669"/>
    <property type="project" value="InterPro"/>
</dbReference>
<dbReference type="GO" id="GO:0030527">
    <property type="term" value="F:structural constituent of chromatin"/>
    <property type="evidence" value="ECO:0007669"/>
    <property type="project" value="InterPro"/>
</dbReference>
<dbReference type="CDD" id="cd22910">
    <property type="entry name" value="HFD_H2B"/>
    <property type="match status" value="1"/>
</dbReference>
<dbReference type="FunFam" id="1.10.20.10:FF:000014">
    <property type="entry name" value="Histone H2B"/>
    <property type="match status" value="1"/>
</dbReference>
<dbReference type="Gene3D" id="1.10.20.10">
    <property type="entry name" value="Histone, subunit A"/>
    <property type="match status" value="1"/>
</dbReference>
<dbReference type="InterPro" id="IPR009072">
    <property type="entry name" value="Histone-fold"/>
</dbReference>
<dbReference type="InterPro" id="IPR007125">
    <property type="entry name" value="Histone_H2A/H2B/H3"/>
</dbReference>
<dbReference type="InterPro" id="IPR000558">
    <property type="entry name" value="Histone_H2B"/>
</dbReference>
<dbReference type="InterPro" id="IPR055333">
    <property type="entry name" value="HISTONE_H2B_site"/>
</dbReference>
<dbReference type="PANTHER" id="PTHR23428">
    <property type="entry name" value="HISTONE H2B"/>
    <property type="match status" value="1"/>
</dbReference>
<dbReference type="Pfam" id="PF00125">
    <property type="entry name" value="Histone"/>
    <property type="match status" value="1"/>
</dbReference>
<dbReference type="PRINTS" id="PR00621">
    <property type="entry name" value="HISTONEH2B"/>
</dbReference>
<dbReference type="SMART" id="SM00427">
    <property type="entry name" value="H2B"/>
    <property type="match status" value="1"/>
</dbReference>
<dbReference type="SUPFAM" id="SSF47113">
    <property type="entry name" value="Histone-fold"/>
    <property type="match status" value="1"/>
</dbReference>
<dbReference type="PROSITE" id="PS00357">
    <property type="entry name" value="HISTONE_H2B"/>
    <property type="match status" value="1"/>
</dbReference>
<sequence>MSAEKKPASKAPAEKKPAAKKTAPSADGKKRTKARKETYSSYIYKVLKQTHPDTGISQKSMSILNSFVNDIFERIASEASKLAAYNKKSTISAREIQTAVRLILPGELAKHAVSEGTRAVTKYSSSTQA</sequence>
<name>H2B1_CANGA</name>
<proteinExistence type="inferred from homology"/>
<protein>
    <recommendedName>
        <fullName>Histone H2B.1</fullName>
    </recommendedName>
</protein>
<comment type="function">
    <text>Core component of nucleosome. Nucleosomes wrap and compact DNA into chromatin, limiting DNA accessibility to the cellular machineries which require DNA as a template. Histones thereby play a central role in transcription regulation, DNA repair, DNA replication and chromosomal stability. DNA accessibility is regulated via a complex set of post-translational modifications of histones, also called histone code, and nucleosome remodeling.</text>
</comment>
<comment type="subunit">
    <text>The nucleosome is a histone octamer containing two molecules each of H2A, H2B, H3 and H4 assembled in one H3-H4 heterotetramer and two H2A-H2B heterodimers. The octamer wraps approximately 147 bp of DNA.</text>
</comment>
<comment type="subcellular location">
    <subcellularLocation>
        <location evidence="1">Nucleus</location>
    </subcellularLocation>
    <subcellularLocation>
        <location evidence="1">Chromosome</location>
    </subcellularLocation>
</comment>
<comment type="PTM">
    <text evidence="1">Monoubiquitinated by the UBC2-BRE1 complex to form H2BK123ub1. H2BK123ub1 gives a specific tag for epigenetic transcriptional activation and is also prerequisite for H3K4me and H3K79me formation. H2BK123ub1 also modulates the formation of double-strand breaks during meiosis and is a prerequisite for DNA-damage checkpoint activation (By similarity).</text>
</comment>
<comment type="PTM">
    <text evidence="1">Phosphorylated by STE20 to form H2BS10ph during progression through meiotic prophase. May be correlated with chromosome condensation (By similarity).</text>
</comment>
<comment type="PTM">
    <text evidence="1">Acetylated by GCN5 to form H2BK11ac and H2BK16ac. H2BK16ac can also be formed by ESA1. Acetylation of N-terminal lysines and particularly formation of H2BK11acK16ac has a positive effect on transcription (By similarity).</text>
</comment>
<comment type="PTM">
    <text evidence="1">Sumoylation to form H2BK6su or H2BK7su, and probably also H2BK16su or H2BK17su, occurs preferentially near the telomeres and represses gene transcription.</text>
</comment>
<comment type="similarity">
    <text evidence="3">Belongs to the histone H2B family.</text>
</comment>
<comment type="caution">
    <text evidence="3">To ensure consistency between histone entries, we follow the 'Brno' nomenclature for histone modifications, with positions referring to those used in the literature for the 'closest' model organism. Due to slight variations in histone sequences between organisms and to the presence of initiator methionine in UniProtKB/Swiss-Prot sequences, the actual positions of modified amino acids in the sequence generally differ. In this entry the following conventions are used: H2BK6ac = acetylated Lys-5; H2BK6su = sumoylated Lys-5; H2BK7ac = acetylated Lys-6; H2BK7su = sumoylated Lys-6; H2BS10ph = phosphorylated Ser-9; H2BK11ac = acetylated Lys-10; H2BK16ac = acetylated Lys-15; H2BK16su = sumoylated Lys-15; H2BK17su = sumoylated Lys-16; H2BK123ub1 = monoubiquitinated Lys-122.</text>
</comment>